<accession>Q20263</accession>
<dbReference type="EMBL" id="BX284602">
    <property type="protein sequence ID" value="CCD65860.1"/>
    <property type="molecule type" value="Genomic_DNA"/>
</dbReference>
<dbReference type="PIR" id="T16317">
    <property type="entry name" value="T16317"/>
</dbReference>
<dbReference type="RefSeq" id="NP_494847.2">
    <property type="nucleotide sequence ID" value="NM_062446.6"/>
</dbReference>
<dbReference type="BioGRID" id="39173">
    <property type="interactions" value="1"/>
</dbReference>
<dbReference type="FunCoup" id="Q20263">
    <property type="interactions" value="2532"/>
</dbReference>
<dbReference type="STRING" id="6239.F41C3.4.1"/>
<dbReference type="PaxDb" id="6239-F41C3.4"/>
<dbReference type="PeptideAtlas" id="Q20263"/>
<dbReference type="EnsemblMetazoa" id="F41C3.4.1">
    <property type="protein sequence ID" value="F41C3.4.1"/>
    <property type="gene ID" value="WBGene00018270"/>
</dbReference>
<dbReference type="GeneID" id="173819"/>
<dbReference type="KEGG" id="cel:CELE_F41C3.4"/>
<dbReference type="UCSC" id="F41C3.4">
    <property type="organism name" value="c. elegans"/>
</dbReference>
<dbReference type="AGR" id="WB:WBGene00018270"/>
<dbReference type="CTD" id="173819"/>
<dbReference type="WormBase" id="F41C3.4">
    <property type="protein sequence ID" value="CE39501"/>
    <property type="gene ID" value="WBGene00018270"/>
    <property type="gene designation" value="eas-1"/>
</dbReference>
<dbReference type="eggNOG" id="KOG1743">
    <property type="taxonomic scope" value="Eukaryota"/>
</dbReference>
<dbReference type="HOGENOM" id="CLU_124519_1_0_1"/>
<dbReference type="InParanoid" id="Q20263"/>
<dbReference type="OMA" id="CFGSTEI"/>
<dbReference type="OrthoDB" id="204784at2759"/>
<dbReference type="PhylomeDB" id="Q20263"/>
<dbReference type="PRO" id="PR:Q20263"/>
<dbReference type="Proteomes" id="UP000001940">
    <property type="component" value="Chromosome II"/>
</dbReference>
<dbReference type="Bgee" id="WBGene00018270">
    <property type="expression patterns" value="Expressed in pharyngeal muscle cell (C elegans) and 4 other cell types or tissues"/>
</dbReference>
<dbReference type="GO" id="GO:0005801">
    <property type="term" value="C:cis-Golgi network"/>
    <property type="evidence" value="ECO:0000314"/>
    <property type="project" value="UniProtKB"/>
</dbReference>
<dbReference type="GO" id="GO:0005829">
    <property type="term" value="C:cytosol"/>
    <property type="evidence" value="ECO:0007669"/>
    <property type="project" value="GOC"/>
</dbReference>
<dbReference type="GO" id="GO:0005783">
    <property type="term" value="C:endoplasmic reticulum"/>
    <property type="evidence" value="ECO:0000318"/>
    <property type="project" value="GO_Central"/>
</dbReference>
<dbReference type="GO" id="GO:0000139">
    <property type="term" value="C:Golgi membrane"/>
    <property type="evidence" value="ECO:0007669"/>
    <property type="project" value="UniProtKB-SubCell"/>
</dbReference>
<dbReference type="GO" id="GO:0016020">
    <property type="term" value="C:membrane"/>
    <property type="evidence" value="ECO:0000318"/>
    <property type="project" value="GO_Central"/>
</dbReference>
<dbReference type="GO" id="GO:0006888">
    <property type="term" value="P:endoplasmic reticulum to Golgi vesicle-mediated transport"/>
    <property type="evidence" value="ECO:0007669"/>
    <property type="project" value="InterPro"/>
</dbReference>
<dbReference type="GO" id="GO:0048193">
    <property type="term" value="P:Golgi vesicle transport"/>
    <property type="evidence" value="ECO:0000315"/>
    <property type="project" value="UniProtKB"/>
</dbReference>
<dbReference type="GO" id="GO:0015031">
    <property type="term" value="P:protein transport"/>
    <property type="evidence" value="ECO:0007669"/>
    <property type="project" value="UniProtKB-KW"/>
</dbReference>
<dbReference type="GO" id="GO:0042147">
    <property type="term" value="P:retrograde transport, endosome to Golgi"/>
    <property type="evidence" value="ECO:0007669"/>
    <property type="project" value="InterPro"/>
</dbReference>
<dbReference type="InterPro" id="IPR045176">
    <property type="entry name" value="Got1"/>
</dbReference>
<dbReference type="InterPro" id="IPR007305">
    <property type="entry name" value="Vesicle_transpt_Got1/SFT2"/>
</dbReference>
<dbReference type="PANTHER" id="PTHR21493">
    <property type="entry name" value="CGI-141-RELATED/LIPASE CONTAINING PROTEIN"/>
    <property type="match status" value="1"/>
</dbReference>
<dbReference type="PANTHER" id="PTHR21493:SF9">
    <property type="entry name" value="GOLGI TRANSPORT PROTEIN 1-RELATED"/>
    <property type="match status" value="1"/>
</dbReference>
<dbReference type="Pfam" id="PF04178">
    <property type="entry name" value="Got1"/>
    <property type="match status" value="1"/>
</dbReference>
<feature type="chain" id="PRO_0000218584" description="Probable Golgi transport protein 1">
    <location>
        <begin position="1"/>
        <end position="141"/>
    </location>
</feature>
<feature type="topological domain" description="Cytoplasmic" evidence="2">
    <location>
        <begin position="1"/>
        <end position="11"/>
    </location>
</feature>
<feature type="transmembrane region" description="Helical; Name=1" evidence="2">
    <location>
        <begin position="12"/>
        <end position="32"/>
    </location>
</feature>
<feature type="topological domain" description="Lumenal" evidence="2">
    <location>
        <position position="33"/>
    </location>
</feature>
<feature type="transmembrane region" description="Helical; Name=2" evidence="2">
    <location>
        <begin position="34"/>
        <end position="54"/>
    </location>
</feature>
<feature type="topological domain" description="Cytoplasmic" evidence="2">
    <location>
        <begin position="55"/>
        <end position="70"/>
    </location>
</feature>
<feature type="transmembrane region" description="Helical; Name=3" evidence="2">
    <location>
        <begin position="71"/>
        <end position="91"/>
    </location>
</feature>
<feature type="topological domain" description="Lumenal" evidence="2">
    <location>
        <begin position="92"/>
        <end position="93"/>
    </location>
</feature>
<feature type="transmembrane region" description="Helical; Name=4" evidence="2">
    <location>
        <begin position="94"/>
        <end position="114"/>
    </location>
</feature>
<feature type="topological domain" description="Cytoplasmic" evidence="2">
    <location>
        <begin position="115"/>
        <end position="141"/>
    </location>
</feature>
<feature type="mutagenesis site" description="In yad83; significantly enlarged AMsh glial cells." evidence="3">
    <original>D</original>
    <variation>A</variation>
    <location>
        <position position="131"/>
    </location>
</feature>
<sequence>MMNFEVSTTKQIGVGLTTFGFFFIFLGVLMFLDSALLAIGNLLFIVGITFIIGVQRTLVFFFEFRKLKGSILFFGGILVVLFGYPLFGMIAECWGFIVLFGGFLPGIVNLLRSIPGISTITYLPGIRQVLDRLAPESKYPV</sequence>
<gene>
    <name evidence="5" type="primary">eas-1</name>
    <name evidence="5" type="ORF">F41C3.4</name>
</gene>
<reference key="1">
    <citation type="journal article" date="1998" name="Science">
        <title>Genome sequence of the nematode C. elegans: a platform for investigating biology.</title>
        <authorList>
            <consortium name="The C. elegans sequencing consortium"/>
        </authorList>
    </citation>
    <scope>NUCLEOTIDE SEQUENCE [LARGE SCALE GENOMIC DNA]</scope>
    <source>
        <strain>Bristol N2</strain>
    </source>
</reference>
<reference key="2">
    <citation type="journal article" date="2020" name="PLoS Biol.">
        <title>Regulation of glial size by eicosapentaenoic acid through a novel Golgi apparatus mechanism.</title>
        <authorList>
            <person name="Zhang A."/>
            <person name="Guan Z."/>
            <person name="Ockerman K."/>
            <person name="Dong P."/>
            <person name="Guo J."/>
            <person name="Wang Z."/>
            <person name="Yan D."/>
        </authorList>
    </citation>
    <scope>FUNCTION</scope>
    <scope>DISRUPTION PHENOTYPE</scope>
    <scope>MUTAGENESIS OF ASP-131</scope>
</reference>
<comment type="function">
    <text evidence="1 3">May be involved in fusion of ER-derived transport vesicles with the Golgi complex (By similarity). Involved in regulating AMsh glial cell size, acting by modulating the E3 ubiquitin ligase rnf-145/RNF145, probably by mediating the translocation of rnf-145 from the cis-Golgi to the trans-Golgi during development (PubMed:33370778).</text>
</comment>
<comment type="subcellular location">
    <subcellularLocation>
        <location evidence="1">Golgi apparatus membrane</location>
        <topology evidence="1">Multi-pass membrane protein</topology>
    </subcellularLocation>
    <subcellularLocation>
        <location evidence="3">Golgi apparatus</location>
        <location evidence="3">cis-Golgi network</location>
    </subcellularLocation>
</comment>
<comment type="developmental stage">
    <text evidence="3">Expressed widely during larval and adult stages.</text>
</comment>
<comment type="disruption phenotype">
    <text evidence="3">RNAi-mediated knockdown causes embryonic lethality, but about 10% of animals survive to early adulthood (PubMed:33370778). Significantly enlarged AMsh glial cells (PubMed:33370778).</text>
</comment>
<comment type="similarity">
    <text evidence="4">Belongs to the GOT1 family.</text>
</comment>
<proteinExistence type="evidence at protein level"/>
<organism>
    <name type="scientific">Caenorhabditis elegans</name>
    <dbReference type="NCBI Taxonomy" id="6239"/>
    <lineage>
        <taxon>Eukaryota</taxon>
        <taxon>Metazoa</taxon>
        <taxon>Ecdysozoa</taxon>
        <taxon>Nematoda</taxon>
        <taxon>Chromadorea</taxon>
        <taxon>Rhabditida</taxon>
        <taxon>Rhabditina</taxon>
        <taxon>Rhabditomorpha</taxon>
        <taxon>Rhabditoidea</taxon>
        <taxon>Rhabditidae</taxon>
        <taxon>Peloderinae</taxon>
        <taxon>Caenorhabditis</taxon>
    </lineage>
</organism>
<evidence type="ECO:0000250" key="1">
    <source>
        <dbReference type="UniProtKB" id="Q9Y3E0"/>
    </source>
</evidence>
<evidence type="ECO:0000255" key="2"/>
<evidence type="ECO:0000269" key="3">
    <source>
    </source>
</evidence>
<evidence type="ECO:0000305" key="4"/>
<evidence type="ECO:0000312" key="5">
    <source>
        <dbReference type="WormBase" id="F41C3.4"/>
    </source>
</evidence>
<name>GOT1_CAEEL</name>
<protein>
    <recommendedName>
        <fullName>Probable Golgi transport protein 1</fullName>
    </recommendedName>
    <alternativeName>
        <fullName evidence="5">Enlarged amphid sheath glia protein 1</fullName>
    </alternativeName>
</protein>
<keyword id="KW-0333">Golgi apparatus</keyword>
<keyword id="KW-0472">Membrane</keyword>
<keyword id="KW-0653">Protein transport</keyword>
<keyword id="KW-1185">Reference proteome</keyword>
<keyword id="KW-0812">Transmembrane</keyword>
<keyword id="KW-1133">Transmembrane helix</keyword>
<keyword id="KW-0813">Transport</keyword>